<proteinExistence type="inferred from homology"/>
<gene>
    <name type="ORF">ORF653</name>
</gene>
<dbReference type="EC" id="2.7.7.7"/>
<dbReference type="EMBL" id="EF432053">
    <property type="protein sequence ID" value="ABP73396.1"/>
    <property type="molecule type" value="Genomic_DNA"/>
</dbReference>
<dbReference type="EMBL" id="EF432053">
    <property type="protein sequence ID" value="ABP73395.1"/>
    <property type="status" value="ALT_INIT"/>
    <property type="molecule type" value="Genomic_DNA"/>
</dbReference>
<dbReference type="RefSeq" id="YP_001210309.1">
    <property type="nucleotide sequence ID" value="NC_009452.1"/>
</dbReference>
<dbReference type="GeneID" id="5129855"/>
<dbReference type="KEGG" id="vg:5129850"/>
<dbReference type="KEGG" id="vg:5129855"/>
<dbReference type="Proteomes" id="UP000000513">
    <property type="component" value="Segment"/>
</dbReference>
<dbReference type="GO" id="GO:0003677">
    <property type="term" value="F:DNA binding"/>
    <property type="evidence" value="ECO:0007669"/>
    <property type="project" value="UniProtKB-KW"/>
</dbReference>
<dbReference type="GO" id="GO:0003887">
    <property type="term" value="F:DNA-directed DNA polymerase activity"/>
    <property type="evidence" value="ECO:0007669"/>
    <property type="project" value="UniProtKB-KW"/>
</dbReference>
<dbReference type="GO" id="GO:0000166">
    <property type="term" value="F:nucleotide binding"/>
    <property type="evidence" value="ECO:0007669"/>
    <property type="project" value="InterPro"/>
</dbReference>
<dbReference type="GO" id="GO:0006260">
    <property type="term" value="P:DNA replication"/>
    <property type="evidence" value="ECO:0007669"/>
    <property type="project" value="UniProtKB-KW"/>
</dbReference>
<dbReference type="GO" id="GO:0039693">
    <property type="term" value="P:viral DNA genome replication"/>
    <property type="evidence" value="ECO:0007669"/>
    <property type="project" value="UniProtKB-KW"/>
</dbReference>
<dbReference type="Gene3D" id="3.90.1600.10">
    <property type="entry name" value="Palm domain of DNA polymerase"/>
    <property type="match status" value="1"/>
</dbReference>
<dbReference type="InterPro" id="IPR006172">
    <property type="entry name" value="DNA-dir_DNA_pol_B"/>
</dbReference>
<dbReference type="InterPro" id="IPR004868">
    <property type="entry name" value="DNA-dir_DNA_pol_B_mt/vir"/>
</dbReference>
<dbReference type="InterPro" id="IPR043502">
    <property type="entry name" value="DNA/RNA_pol_sf"/>
</dbReference>
<dbReference type="InterPro" id="IPR023211">
    <property type="entry name" value="DNA_pol_palm_dom_sf"/>
</dbReference>
<dbReference type="InterPro" id="IPR012337">
    <property type="entry name" value="RNaseH-like_sf"/>
</dbReference>
<dbReference type="Pfam" id="PF03175">
    <property type="entry name" value="DNA_pol_B_2"/>
    <property type="match status" value="1"/>
</dbReference>
<dbReference type="SMART" id="SM00486">
    <property type="entry name" value="POLBc"/>
    <property type="match status" value="1"/>
</dbReference>
<dbReference type="SUPFAM" id="SSF56672">
    <property type="entry name" value="DNA/RNA polymerases"/>
    <property type="match status" value="1"/>
</dbReference>
<dbReference type="SUPFAM" id="SSF53098">
    <property type="entry name" value="Ribonuclease H-like"/>
    <property type="match status" value="1"/>
</dbReference>
<reference key="1">
    <citation type="journal article" date="2007" name="Virology">
        <title>Genome of the Acidianus bottle-shaped virus and insights into the replication and packaging mechanisms.</title>
        <authorList>
            <person name="Peng X."/>
            <person name="Basta T."/>
            <person name="Haring M."/>
            <person name="Garrett R.A."/>
            <person name="Prangishvili D."/>
        </authorList>
    </citation>
    <scope>NUCLEOTIDE SEQUENCE [GENOMIC DNA]</scope>
</reference>
<feature type="chain" id="PRO_0000384817" description="DNA polymerase">
    <location>
        <begin position="1"/>
        <end position="653"/>
    </location>
</feature>
<feature type="splice variant" id="VSP_038084" description="In isoform ORF462." evidence="2">
    <location>
        <begin position="1"/>
        <end position="191"/>
    </location>
</feature>
<organismHost>
    <name type="scientific">Acidianus convivator</name>
    <dbReference type="NCBI Taxonomy" id="269667"/>
</organismHost>
<comment type="function">
    <text evidence="1">Replicates viral genomic DNA.</text>
</comment>
<comment type="catalytic activity">
    <reaction>
        <text>DNA(n) + a 2'-deoxyribonucleoside 5'-triphosphate = DNA(n+1) + diphosphate</text>
        <dbReference type="Rhea" id="RHEA:22508"/>
        <dbReference type="Rhea" id="RHEA-COMP:17339"/>
        <dbReference type="Rhea" id="RHEA-COMP:17340"/>
        <dbReference type="ChEBI" id="CHEBI:33019"/>
        <dbReference type="ChEBI" id="CHEBI:61560"/>
        <dbReference type="ChEBI" id="CHEBI:173112"/>
        <dbReference type="EC" id="2.7.7.7"/>
    </reaction>
</comment>
<comment type="alternative products">
    <event type="alternative initiation"/>
    <isoform>
        <id>A4ZU91-1</id>
        <name>DNA polymerase</name>
        <sequence type="displayed"/>
    </isoform>
    <isoform>
        <id>A4ZU91-2</id>
        <name>ORF462</name>
        <sequence type="described" ref="VSP_038084"/>
    </isoform>
</comment>
<comment type="miscellaneous">
    <molecule>Isoform ORF462</molecule>
    <text evidence="2">Produced by alternative initiation of the DNA polymerase mRNA.</text>
</comment>
<comment type="similarity">
    <text evidence="2">Belongs to the DNA polymerase type-B family.</text>
</comment>
<comment type="sequence caution" evidence="2">
    <conflict type="erroneous initiation">
        <sequence resource="EMBL-CDS" id="ABP73395"/>
    </conflict>
</comment>
<name>DPOL_ABVP</name>
<sequence>MLQILNNANDKIQYKLNDFSDLTPSFKIKSGFFTIHRINYEKLEENEEEKPRQISAFDIETNGREIFFGVYDGSEYKYVIIRKPEDVKNALDLLTEETYFYGDYDLPVSLANYVLLGKHSKFAKKITGENYFTTKNLRIKRYKNFYKILYNGRSINSINLLQFYSESLYEAYSRYYTKLQEMGFQVFDEQTMKEWKEDKEKRANFDKLDFNDPKTIQEIARYNKLDVIATYQLALLKNSLFGIKVKSTLPRTAITYIISQVQSEFVKGLRSYTEIELTLKRLYKGGLFDSNELGKFKKVYKYDVNSMYPFMMSWLPELELVETQKGFEVNEEPLLKGTQFNEDAKYVYIYKITLKQDRKYVASKANGMLLRMMYNRGSFFDFELADEKHELIPDIKIVGQYYTMKFKITKHRIFKDVIYNLYNKRLQLKKEKNPLEKVYKLILNSSYGKFGERIGFNAKFQNVIYASMITALGRTFIQNVDPNAISYLTDSVISKAPIKSELVGDQLGQLKQEGVGEAIVIGNGQYILNDPQEKMIKLRGFNVDESIAEKIIEYVGNYLAKGKIVRVQIPTKIMIRNLQQYKILAEKDSNVLMGMLSNQIKIFTPLNTKQRYTYNVHWFGSMFRDEQEHKEYRKTWEKYIETIEPIDLNSILS</sequence>
<keyword id="KW-0024">Alternative initiation</keyword>
<keyword id="KW-0235">DNA replication</keyword>
<keyword id="KW-0238">DNA-binding</keyword>
<keyword id="KW-0239">DNA-directed DNA polymerase</keyword>
<keyword id="KW-0548">Nucleotidyltransferase</keyword>
<keyword id="KW-1185">Reference proteome</keyword>
<keyword id="KW-0808">Transferase</keyword>
<keyword id="KW-1194">Viral DNA replication</keyword>
<accession>A4ZU91</accession>
<accession>A4ZU92</accession>
<protein>
    <recommendedName>
        <fullName>DNA polymerase</fullName>
        <ecNumber>2.7.7.7</ecNumber>
    </recommendedName>
</protein>
<evidence type="ECO:0000250" key="1"/>
<evidence type="ECO:0000305" key="2"/>
<organism>
    <name type="scientific">Acidianus bottle-shaped virus (isolate Italy/Pozzuoli)</name>
    <name type="common">ABV</name>
    <dbReference type="NCBI Taxonomy" id="654911"/>
    <lineage>
        <taxon>Viruses</taxon>
        <taxon>Viruses incertae sedis</taxon>
        <taxon>Ampullaviridae</taxon>
        <taxon>Bottigliavirus</taxon>
        <taxon>Bottigliavirus ABV</taxon>
    </lineage>
</organism>